<feature type="chain" id="PRO_1000076549" description="Iron-sulfur cluster assembly protein CyaY">
    <location>
        <begin position="1"/>
        <end position="106"/>
    </location>
</feature>
<evidence type="ECO:0000255" key="1">
    <source>
        <dbReference type="HAMAP-Rule" id="MF_00142"/>
    </source>
</evidence>
<comment type="function">
    <text evidence="1">Involved in iron-sulfur (Fe-S) cluster assembly. May act as a regulator of Fe-S biogenesis.</text>
</comment>
<comment type="similarity">
    <text evidence="1">Belongs to the frataxin family.</text>
</comment>
<reference key="1">
    <citation type="submission" date="2007-11" db="EMBL/GenBank/DDBJ databases">
        <authorList>
            <consortium name="The Salmonella enterica serovar Arizonae Genome Sequencing Project"/>
            <person name="McClelland M."/>
            <person name="Sanderson E.K."/>
            <person name="Porwollik S."/>
            <person name="Spieth J."/>
            <person name="Clifton W.S."/>
            <person name="Fulton R."/>
            <person name="Chunyan W."/>
            <person name="Wollam A."/>
            <person name="Shah N."/>
            <person name="Pepin K."/>
            <person name="Bhonagiri V."/>
            <person name="Nash W."/>
            <person name="Johnson M."/>
            <person name="Thiruvilangam P."/>
            <person name="Wilson R."/>
        </authorList>
    </citation>
    <scope>NUCLEOTIDE SEQUENCE [LARGE SCALE GENOMIC DNA]</scope>
    <source>
        <strain>ATCC BAA-731 / CDC346-86 / RSK2980</strain>
    </source>
</reference>
<protein>
    <recommendedName>
        <fullName evidence="1">Iron-sulfur cluster assembly protein CyaY</fullName>
    </recommendedName>
</protein>
<accession>A9MJ08</accession>
<dbReference type="EMBL" id="CP000880">
    <property type="protein sequence ID" value="ABX23517.1"/>
    <property type="molecule type" value="Genomic_DNA"/>
</dbReference>
<dbReference type="SMR" id="A9MJ08"/>
<dbReference type="STRING" id="41514.SARI_03712"/>
<dbReference type="KEGG" id="ses:SARI_03712"/>
<dbReference type="HOGENOM" id="CLU_080880_3_0_6"/>
<dbReference type="Proteomes" id="UP000002084">
    <property type="component" value="Chromosome"/>
</dbReference>
<dbReference type="GO" id="GO:0005829">
    <property type="term" value="C:cytosol"/>
    <property type="evidence" value="ECO:0007669"/>
    <property type="project" value="TreeGrafter"/>
</dbReference>
<dbReference type="GO" id="GO:0008199">
    <property type="term" value="F:ferric iron binding"/>
    <property type="evidence" value="ECO:0007669"/>
    <property type="project" value="InterPro"/>
</dbReference>
<dbReference type="GO" id="GO:0008198">
    <property type="term" value="F:ferrous iron binding"/>
    <property type="evidence" value="ECO:0007669"/>
    <property type="project" value="TreeGrafter"/>
</dbReference>
<dbReference type="GO" id="GO:0016226">
    <property type="term" value="P:iron-sulfur cluster assembly"/>
    <property type="evidence" value="ECO:0007669"/>
    <property type="project" value="UniProtKB-UniRule"/>
</dbReference>
<dbReference type="CDD" id="cd00503">
    <property type="entry name" value="Frataxin"/>
    <property type="match status" value="1"/>
</dbReference>
<dbReference type="FunFam" id="3.30.920.10:FF:000001">
    <property type="entry name" value="Iron-sulfur cluster assembly protein CyaY"/>
    <property type="match status" value="1"/>
</dbReference>
<dbReference type="Gene3D" id="3.30.920.10">
    <property type="entry name" value="Frataxin/CyaY"/>
    <property type="match status" value="1"/>
</dbReference>
<dbReference type="HAMAP" id="MF_00142">
    <property type="entry name" value="CyaY"/>
    <property type="match status" value="1"/>
</dbReference>
<dbReference type="InterPro" id="IPR047584">
    <property type="entry name" value="CyaY"/>
</dbReference>
<dbReference type="InterPro" id="IPR002908">
    <property type="entry name" value="Frataxin/CyaY"/>
</dbReference>
<dbReference type="InterPro" id="IPR036524">
    <property type="entry name" value="Frataxin/CyaY_sf"/>
</dbReference>
<dbReference type="InterPro" id="IPR020895">
    <property type="entry name" value="Frataxin_CS"/>
</dbReference>
<dbReference type="NCBIfam" id="TIGR03421">
    <property type="entry name" value="FeS_CyaY"/>
    <property type="match status" value="1"/>
</dbReference>
<dbReference type="PANTHER" id="PTHR16821">
    <property type="entry name" value="FRATAXIN"/>
    <property type="match status" value="1"/>
</dbReference>
<dbReference type="PANTHER" id="PTHR16821:SF2">
    <property type="entry name" value="FRATAXIN, MITOCHONDRIAL"/>
    <property type="match status" value="1"/>
</dbReference>
<dbReference type="Pfam" id="PF01491">
    <property type="entry name" value="Frataxin_Cyay"/>
    <property type="match status" value="1"/>
</dbReference>
<dbReference type="SMART" id="SM01219">
    <property type="entry name" value="Frataxin_Cyay"/>
    <property type="match status" value="1"/>
</dbReference>
<dbReference type="SUPFAM" id="SSF55387">
    <property type="entry name" value="Frataxin/Nqo15-like"/>
    <property type="match status" value="1"/>
</dbReference>
<dbReference type="PROSITE" id="PS01344">
    <property type="entry name" value="FRATAXIN_1"/>
    <property type="match status" value="1"/>
</dbReference>
<dbReference type="PROSITE" id="PS50810">
    <property type="entry name" value="FRATAXIN_2"/>
    <property type="match status" value="1"/>
</dbReference>
<sequence>MNDSEFHRLADTLWLTIEERLDNWDGDSDIDCEINGGVLTLSFENGSKIIINRQEPLHQVWLATKQGGYHFDLKGDEWICDRSGATFWDLLEQAATQQAGEAVSFR</sequence>
<name>CYAY_SALAR</name>
<keyword id="KW-0408">Iron</keyword>
<keyword id="KW-0479">Metal-binding</keyword>
<keyword id="KW-1185">Reference proteome</keyword>
<organism>
    <name type="scientific">Salmonella arizonae (strain ATCC BAA-731 / CDC346-86 / RSK2980)</name>
    <dbReference type="NCBI Taxonomy" id="41514"/>
    <lineage>
        <taxon>Bacteria</taxon>
        <taxon>Pseudomonadati</taxon>
        <taxon>Pseudomonadota</taxon>
        <taxon>Gammaproteobacteria</taxon>
        <taxon>Enterobacterales</taxon>
        <taxon>Enterobacteriaceae</taxon>
        <taxon>Salmonella</taxon>
    </lineage>
</organism>
<gene>
    <name evidence="1" type="primary">cyaY</name>
    <name type="ordered locus">SARI_03712</name>
</gene>
<proteinExistence type="inferred from homology"/>